<protein>
    <recommendedName>
        <fullName evidence="3">Glucose transporter GlcP</fullName>
    </recommendedName>
    <alternativeName>
        <fullName evidence="2">Glucose/H(+) symporter</fullName>
    </alternativeName>
</protein>
<comment type="function">
    <text evidence="1">Transporter highly specific for glucose uptake.</text>
</comment>
<comment type="activity regulation">
    <text evidence="1">Inhibited by carbonyl cyanide m-chlorophenylhydrazone (CCCP) and by the human glucose transport inhibitors cytochalasin B, phloretin, and forskolin.</text>
</comment>
<comment type="biophysicochemical properties">
    <kinetics>
        <KM evidence="1">29 uM for glucose</KM>
        <Vmax evidence="1">160.0 nmol/min/mg enzyme</Vmax>
    </kinetics>
</comment>
<comment type="subcellular location">
    <subcellularLocation>
        <location evidence="1">Cell membrane</location>
        <topology evidence="1">Multi-pass membrane protein</topology>
    </subcellularLocation>
</comment>
<comment type="similarity">
    <text evidence="3">Belongs to the major facilitator superfamily. Sugar transporter (TC 2.A.1.1) family.</text>
</comment>
<comment type="sequence caution" evidence="3">
    <conflict type="erroneous initiation">
        <sequence resource="EMBL-CDS" id="AAO03844"/>
    </conflict>
    <text>Extended N-terminus.</text>
</comment>
<evidence type="ECO:0000269" key="1">
    <source>
    </source>
</evidence>
<evidence type="ECO:0000303" key="2">
    <source>
    </source>
</evidence>
<evidence type="ECO:0000305" key="3"/>
<evidence type="ECO:0000305" key="4">
    <source>
    </source>
</evidence>
<evidence type="ECO:0000312" key="5">
    <source>
        <dbReference type="EMBL" id="AAO03844.1"/>
    </source>
</evidence>
<evidence type="ECO:0007744" key="6">
    <source>
        <dbReference type="PDB" id="4LDS"/>
    </source>
</evidence>
<evidence type="ECO:0007829" key="7">
    <source>
        <dbReference type="PDB" id="4LDS"/>
    </source>
</evidence>
<sequence>MKANKYLIFILGALGGLLYGYDNGVISGALLFIHKDIPLNSTTEGIVVSSMLIGAIVGAGSSGPLADKLGRRRLVMLIAIVFIIGALILAASTNLALLIIGRLIIGLAVGGSMSTVPVYLSEMAPTEYRGSLGSLNQLMITIGILAAYLVNYAFADIEGWRWMLGLAVVPSVILLVGIYFMPESPRWLLENRNEEAARQVMKITYDDSEIDKELKEMKEINAISESTWTVIKSPWLGRILIVGCIFAIFQQFIGINAVIFYSSSIFAKAGLGEAASILGSVGIGTINVLVTIVAIFVVDKIDRKKLLVGGNIGMIASLLIMAILIWTIGIASSAWIIIVCLSLFIVFFGISWGPVLWVMLPELFPMRARGAATGISALVLNIGTLIVSLFFPILSDALSTEWVFLIFAFIGVLAMIFVIKFLPETRGRSLEEIEYELRERTGARTE</sequence>
<feature type="chain" id="PRO_0000449125" description="Glucose transporter GlcP">
    <location>
        <begin position="1"/>
        <end position="446"/>
    </location>
</feature>
<feature type="topological domain" description="Cytoplasmic" evidence="4">
    <location>
        <begin position="1"/>
        <end position="6"/>
    </location>
</feature>
<feature type="transmembrane region" description="Helical" evidence="4">
    <location>
        <begin position="7"/>
        <end position="31"/>
    </location>
</feature>
<feature type="topological domain" description="Extracellular" evidence="4">
    <location>
        <begin position="32"/>
        <end position="38"/>
    </location>
</feature>
<feature type="transmembrane region" description="Helical" evidence="4">
    <location>
        <begin position="39"/>
        <end position="64"/>
    </location>
</feature>
<feature type="topological domain" description="Cytoplasmic" evidence="4">
    <location>
        <begin position="65"/>
        <end position="70"/>
    </location>
</feature>
<feature type="transmembrane region" description="Helical" evidence="4">
    <location>
        <begin position="71"/>
        <end position="90"/>
    </location>
</feature>
<feature type="topological domain" description="Extracellular" evidence="4">
    <location>
        <begin position="91"/>
        <end position="94"/>
    </location>
</feature>
<feature type="transmembrane region" description="Helical" evidence="4">
    <location>
        <begin position="95"/>
        <end position="122"/>
    </location>
</feature>
<feature type="topological domain" description="Cytoplasmic" evidence="4">
    <location>
        <begin position="123"/>
        <end position="129"/>
    </location>
</feature>
<feature type="transmembrane region" description="Helical" evidence="4">
    <location>
        <begin position="130"/>
        <end position="152"/>
    </location>
</feature>
<feature type="topological domain" description="Extracellular" evidence="4">
    <location>
        <begin position="153"/>
        <end position="154"/>
    </location>
</feature>
<feature type="transmembrane region" description="Helical" evidence="4">
    <location>
        <begin position="155"/>
        <end position="180"/>
    </location>
</feature>
<feature type="topological domain" description="Cytoplasmic" evidence="4">
    <location>
        <begin position="181"/>
        <end position="234"/>
    </location>
</feature>
<feature type="transmembrane region" description="Helical" evidence="4">
    <location>
        <begin position="235"/>
        <end position="269"/>
    </location>
</feature>
<feature type="topological domain" description="Extracellular" evidence="4">
    <location>
        <begin position="270"/>
        <end position="272"/>
    </location>
</feature>
<feature type="transmembrane region" description="Helical" evidence="4">
    <location>
        <begin position="273"/>
        <end position="295"/>
    </location>
</feature>
<feature type="topological domain" description="Cytoplasmic" evidence="4">
    <location>
        <begin position="296"/>
        <end position="303"/>
    </location>
</feature>
<feature type="transmembrane region" description="Helical" evidence="4">
    <location>
        <begin position="304"/>
        <end position="324"/>
    </location>
</feature>
<feature type="topological domain" description="Extracellular" evidence="4">
    <location>
        <begin position="325"/>
        <end position="329"/>
    </location>
</feature>
<feature type="transmembrane region" description="Helical" evidence="4">
    <location>
        <begin position="330"/>
        <end position="363"/>
    </location>
</feature>
<feature type="topological domain" description="Cytoplasmic" evidence="4">
    <location>
        <begin position="364"/>
        <end position="370"/>
    </location>
</feature>
<feature type="transmembrane region" description="Helical" evidence="4">
    <location>
        <begin position="371"/>
        <end position="399"/>
    </location>
</feature>
<feature type="topological domain" description="Extracellular" evidence="4">
    <location>
        <begin position="400"/>
        <end position="401"/>
    </location>
</feature>
<feature type="transmembrane region" description="Helical" evidence="4">
    <location>
        <begin position="402"/>
        <end position="420"/>
    </location>
</feature>
<feature type="topological domain" description="Cytoplasmic" evidence="4">
    <location>
        <begin position="421"/>
        <end position="446"/>
    </location>
</feature>
<feature type="site" description="Important for symport activity" evidence="4">
    <location>
        <position position="22"/>
    </location>
</feature>
<feature type="site" description="Important for symport activity" evidence="4">
    <location>
        <position position="105"/>
    </location>
</feature>
<feature type="mutagenesis site" description="Affects symport activity. May function as an uniporter." evidence="1">
    <original>D</original>
    <variation>N</variation>
    <location>
        <position position="22"/>
    </location>
</feature>
<feature type="mutagenesis site" description="Loss of transport activity." evidence="1">
    <original>R</original>
    <variation>A</variation>
    <location>
        <position position="102"/>
    </location>
</feature>
<feature type="mutagenesis site" description="Affects symport activity. May function as an uniporter." evidence="1">
    <original>I</original>
    <variation>S</variation>
    <location>
        <position position="105"/>
    </location>
</feature>
<feature type="mutagenesis site" description="Loss of transport activity." evidence="1">
    <original>E</original>
    <variation>A</variation>
    <location>
        <position position="122"/>
    </location>
</feature>
<feature type="mutagenesis site" description="Loss of transport activity." evidence="1">
    <original>Q</original>
    <variation>A</variation>
    <location>
        <position position="137"/>
    </location>
</feature>
<feature type="mutagenesis site" description="Loss of transport activity." evidence="1">
    <original>Q</original>
    <variation>A</variation>
    <location>
        <position position="250"/>
    </location>
</feature>
<feature type="mutagenesis site" description="Loss of transport activity." evidence="1">
    <original>Q</original>
    <variation>A</variation>
    <location>
        <position position="251"/>
    </location>
</feature>
<feature type="mutagenesis site" description="Loss of transport activity." evidence="1">
    <original>N</original>
    <variation>A</variation>
    <location>
        <position position="256"/>
    </location>
</feature>
<feature type="mutagenesis site" description="Loss of transport activity." evidence="1">
    <original>W</original>
    <variation>A</variation>
    <location>
        <position position="357"/>
    </location>
</feature>
<feature type="helix" evidence="7">
    <location>
        <begin position="8"/>
        <end position="32"/>
    </location>
</feature>
<feature type="helix" evidence="7">
    <location>
        <begin position="33"/>
        <end position="35"/>
    </location>
</feature>
<feature type="helix" evidence="7">
    <location>
        <begin position="41"/>
        <end position="60"/>
    </location>
</feature>
<feature type="helix" evidence="7">
    <location>
        <begin position="62"/>
        <end position="68"/>
    </location>
</feature>
<feature type="helix" evidence="7">
    <location>
        <begin position="72"/>
        <end position="88"/>
    </location>
</feature>
<feature type="helix" evidence="7">
    <location>
        <begin position="96"/>
        <end position="123"/>
    </location>
</feature>
<feature type="turn" evidence="7">
    <location>
        <begin position="129"/>
        <end position="132"/>
    </location>
</feature>
<feature type="helix" evidence="7">
    <location>
        <begin position="133"/>
        <end position="151"/>
    </location>
</feature>
<feature type="helix" evidence="7">
    <location>
        <begin position="157"/>
        <end position="179"/>
    </location>
</feature>
<feature type="helix" evidence="7">
    <location>
        <begin position="185"/>
        <end position="190"/>
    </location>
</feature>
<feature type="helix" evidence="7">
    <location>
        <begin position="195"/>
        <end position="205"/>
    </location>
</feature>
<feature type="strand" evidence="7">
    <location>
        <begin position="207"/>
        <end position="209"/>
    </location>
</feature>
<feature type="helix" evidence="7">
    <location>
        <begin position="210"/>
        <end position="227"/>
    </location>
</feature>
<feature type="strand" evidence="7">
    <location>
        <begin position="228"/>
        <end position="230"/>
    </location>
</feature>
<feature type="helix" evidence="7">
    <location>
        <begin position="236"/>
        <end position="251"/>
    </location>
</feature>
<feature type="strand" evidence="7">
    <location>
        <begin position="252"/>
        <end position="254"/>
    </location>
</feature>
<feature type="helix" evidence="7">
    <location>
        <begin position="255"/>
        <end position="258"/>
    </location>
</feature>
<feature type="helix" evidence="7">
    <location>
        <begin position="260"/>
        <end position="268"/>
    </location>
</feature>
<feature type="turn" evidence="7">
    <location>
        <begin position="269"/>
        <end position="271"/>
    </location>
</feature>
<feature type="helix" evidence="7">
    <location>
        <begin position="274"/>
        <end position="277"/>
    </location>
</feature>
<feature type="helix" evidence="7">
    <location>
        <begin position="280"/>
        <end position="296"/>
    </location>
</feature>
<feature type="strand" evidence="7">
    <location>
        <begin position="299"/>
        <end position="301"/>
    </location>
</feature>
<feature type="helix" evidence="7">
    <location>
        <begin position="304"/>
        <end position="326"/>
    </location>
</feature>
<feature type="helix" evidence="7">
    <location>
        <begin position="330"/>
        <end position="350"/>
    </location>
</feature>
<feature type="turn" evidence="7">
    <location>
        <begin position="351"/>
        <end position="354"/>
    </location>
</feature>
<feature type="helix" evidence="7">
    <location>
        <begin position="355"/>
        <end position="359"/>
    </location>
</feature>
<feature type="turn" evidence="7">
    <location>
        <begin position="360"/>
        <end position="363"/>
    </location>
</feature>
<feature type="helix" evidence="7">
    <location>
        <begin position="370"/>
        <end position="390"/>
    </location>
</feature>
<feature type="helix" evidence="7">
    <location>
        <begin position="391"/>
        <end position="396"/>
    </location>
</feature>
<feature type="helix" evidence="7">
    <location>
        <begin position="402"/>
        <end position="420"/>
    </location>
</feature>
<accession>A0A0H2VG78</accession>
<name>GLCP_STAES</name>
<gene>
    <name evidence="2" type="primary">glcP</name>
    <name evidence="5" type="ordered locus">SE_0247</name>
</gene>
<dbReference type="EMBL" id="AE015929">
    <property type="protein sequence ID" value="AAO03844.1"/>
    <property type="status" value="ALT_INIT"/>
    <property type="molecule type" value="Genomic_DNA"/>
</dbReference>
<dbReference type="RefSeq" id="NP_763802.1">
    <property type="nucleotide sequence ID" value="NC_004461.1"/>
</dbReference>
<dbReference type="RefSeq" id="WP_001830529.1">
    <property type="nucleotide sequence ID" value="NZ_WBME01000011.1"/>
</dbReference>
<dbReference type="PDB" id="4LDS">
    <property type="method" value="X-ray"/>
    <property type="resolution" value="3.20 A"/>
    <property type="chains" value="A/B=1-446"/>
</dbReference>
<dbReference type="PDBsum" id="4LDS"/>
<dbReference type="SMR" id="A0A0H2VG78"/>
<dbReference type="KEGG" id="sep:SE_0247"/>
<dbReference type="PATRIC" id="fig|176280.10.peg.224"/>
<dbReference type="eggNOG" id="COG2814">
    <property type="taxonomic scope" value="Bacteria"/>
</dbReference>
<dbReference type="HOGENOM" id="CLU_001265_30_5_9"/>
<dbReference type="OrthoDB" id="9783823at2"/>
<dbReference type="EvolutionaryTrace" id="A0A0H2VG78"/>
<dbReference type="Proteomes" id="UP000001411">
    <property type="component" value="Chromosome"/>
</dbReference>
<dbReference type="GO" id="GO:0005886">
    <property type="term" value="C:plasma membrane"/>
    <property type="evidence" value="ECO:0007669"/>
    <property type="project" value="UniProtKB-SubCell"/>
</dbReference>
<dbReference type="GO" id="GO:0015293">
    <property type="term" value="F:symporter activity"/>
    <property type="evidence" value="ECO:0007669"/>
    <property type="project" value="UniProtKB-KW"/>
</dbReference>
<dbReference type="CDD" id="cd17359">
    <property type="entry name" value="MFS_XylE_like"/>
    <property type="match status" value="1"/>
</dbReference>
<dbReference type="FunFam" id="1.20.1250.20:FF:000073">
    <property type="entry name" value="MFS myo-inositol transporter, putative"/>
    <property type="match status" value="1"/>
</dbReference>
<dbReference type="Gene3D" id="1.20.1250.20">
    <property type="entry name" value="MFS general substrate transporter like domains"/>
    <property type="match status" value="1"/>
</dbReference>
<dbReference type="InterPro" id="IPR020846">
    <property type="entry name" value="MFS_dom"/>
</dbReference>
<dbReference type="InterPro" id="IPR005828">
    <property type="entry name" value="MFS_sugar_transport-like"/>
</dbReference>
<dbReference type="InterPro" id="IPR036259">
    <property type="entry name" value="MFS_trans_sf"/>
</dbReference>
<dbReference type="InterPro" id="IPR050814">
    <property type="entry name" value="Myo-inositol_Transporter"/>
</dbReference>
<dbReference type="InterPro" id="IPR003663">
    <property type="entry name" value="Sugar/inositol_transpt"/>
</dbReference>
<dbReference type="InterPro" id="IPR005829">
    <property type="entry name" value="Sugar_transporter_CS"/>
</dbReference>
<dbReference type="InterPro" id="IPR047984">
    <property type="entry name" value="XylE-like"/>
</dbReference>
<dbReference type="NCBIfam" id="TIGR00879">
    <property type="entry name" value="SP"/>
    <property type="match status" value="1"/>
</dbReference>
<dbReference type="PANTHER" id="PTHR48020">
    <property type="entry name" value="PROTON MYO-INOSITOL COTRANSPORTER"/>
    <property type="match status" value="1"/>
</dbReference>
<dbReference type="PANTHER" id="PTHR48020:SF12">
    <property type="entry name" value="PROTON MYO-INOSITOL COTRANSPORTER"/>
    <property type="match status" value="1"/>
</dbReference>
<dbReference type="Pfam" id="PF00083">
    <property type="entry name" value="Sugar_tr"/>
    <property type="match status" value="1"/>
</dbReference>
<dbReference type="PRINTS" id="PR00171">
    <property type="entry name" value="SUGRTRNSPORT"/>
</dbReference>
<dbReference type="SUPFAM" id="SSF103473">
    <property type="entry name" value="MFS general substrate transporter"/>
    <property type="match status" value="1"/>
</dbReference>
<dbReference type="PROSITE" id="PS50850">
    <property type="entry name" value="MFS"/>
    <property type="match status" value="1"/>
</dbReference>
<dbReference type="PROSITE" id="PS00216">
    <property type="entry name" value="SUGAR_TRANSPORT_1"/>
    <property type="match status" value="1"/>
</dbReference>
<dbReference type="PROSITE" id="PS00217">
    <property type="entry name" value="SUGAR_TRANSPORT_2"/>
    <property type="match status" value="1"/>
</dbReference>
<reference key="1">
    <citation type="journal article" date="2003" name="Mol. Microbiol.">
        <title>Genome-based analysis of virulence genes in a non-biofilm-forming Staphylococcus epidermidis strain (ATCC 12228).</title>
        <authorList>
            <person name="Zhang Y.-Q."/>
            <person name="Ren S.-X."/>
            <person name="Li H.-L."/>
            <person name="Wang Y.-X."/>
            <person name="Fu G."/>
            <person name="Yang J."/>
            <person name="Qin Z.-Q."/>
            <person name="Miao Y.-G."/>
            <person name="Wang W.-Y."/>
            <person name="Chen R.-S."/>
            <person name="Shen Y."/>
            <person name="Chen Z."/>
            <person name="Yuan Z.-H."/>
            <person name="Zhao G.-P."/>
            <person name="Qu D."/>
            <person name="Danchin A."/>
            <person name="Wen Y.-M."/>
        </authorList>
    </citation>
    <scope>NUCLEOTIDE SEQUENCE [LARGE SCALE GENOMIC DNA]</scope>
    <source>
        <strain>ATCC 12228 / FDA PCI 1200</strain>
    </source>
</reference>
<reference evidence="6" key="2">
    <citation type="journal article" date="2013" name="Proc. Natl. Acad. Sci. U.S.A.">
        <title>Crystal structure of a glucose/H+ symporter and its mechanism of action.</title>
        <authorList>
            <person name="Iancu C.V."/>
            <person name="Zamoon J."/>
            <person name="Woo S.B."/>
            <person name="Aleshin A."/>
            <person name="Choe J.Y."/>
        </authorList>
    </citation>
    <scope>X-RAY CRYSTALLOGRAPHY (3.20 ANGSTROMS)</scope>
    <scope>FUNCTION</scope>
    <scope>ACTIVITY REGULATION</scope>
    <scope>BIOPHYSICOCHEMICAL PROPERTIES</scope>
    <scope>SUBCELLULAR LOCATION</scope>
    <scope>TOPOLOGY</scope>
    <scope>MUTAGENESIS OF ASP-22; ARG-102; ILE-105; GLU-122; GLN-137; GLN-250; GLN-251; ASN-256 AND TRP-357</scope>
</reference>
<organism>
    <name type="scientific">Staphylococcus epidermidis (strain ATCC 12228 / FDA PCI 1200)</name>
    <dbReference type="NCBI Taxonomy" id="176280"/>
    <lineage>
        <taxon>Bacteria</taxon>
        <taxon>Bacillati</taxon>
        <taxon>Bacillota</taxon>
        <taxon>Bacilli</taxon>
        <taxon>Bacillales</taxon>
        <taxon>Staphylococcaceae</taxon>
        <taxon>Staphylococcus</taxon>
    </lineage>
</organism>
<proteinExistence type="evidence at protein level"/>
<keyword id="KW-0002">3D-structure</keyword>
<keyword id="KW-1003">Cell membrane</keyword>
<keyword id="KW-0472">Membrane</keyword>
<keyword id="KW-0762">Sugar transport</keyword>
<keyword id="KW-0769">Symport</keyword>
<keyword id="KW-0812">Transmembrane</keyword>
<keyword id="KW-1133">Transmembrane helix</keyword>
<keyword id="KW-0813">Transport</keyword>